<evidence type="ECO:0000255" key="1">
    <source>
        <dbReference type="HAMAP-Rule" id="MF_00023"/>
    </source>
</evidence>
<feature type="chain" id="PRO_0000103070" description="SsrA-binding protein">
    <location>
        <begin position="1"/>
        <end position="149"/>
    </location>
</feature>
<organism>
    <name type="scientific">Wolbachia sp. subsp. Brugia malayi (strain TRS)</name>
    <dbReference type="NCBI Taxonomy" id="292805"/>
    <lineage>
        <taxon>Bacteria</taxon>
        <taxon>Pseudomonadati</taxon>
        <taxon>Pseudomonadota</taxon>
        <taxon>Alphaproteobacteria</taxon>
        <taxon>Rickettsiales</taxon>
        <taxon>Anaplasmataceae</taxon>
        <taxon>Wolbachieae</taxon>
        <taxon>Wolbachia</taxon>
    </lineage>
</organism>
<comment type="function">
    <text evidence="1">Required for rescue of stalled ribosomes mediated by trans-translation. Binds to transfer-messenger RNA (tmRNA), required for stable association of tmRNA with ribosomes. tmRNA and SmpB together mimic tRNA shape, replacing the anticodon stem-loop with SmpB. tmRNA is encoded by the ssrA gene; the 2 termini fold to resemble tRNA(Ala) and it encodes a 'tag peptide', a short internal open reading frame. During trans-translation Ala-aminoacylated tmRNA acts like a tRNA, entering the A-site of stalled ribosomes, displacing the stalled mRNA. The ribosome then switches to translate the ORF on the tmRNA; the nascent peptide is terminated with the 'tag peptide' encoded by the tmRNA and targeted for degradation. The ribosome is freed to recommence translation, which seems to be the essential function of trans-translation.</text>
</comment>
<comment type="subcellular location">
    <subcellularLocation>
        <location evidence="1">Cytoplasm</location>
    </subcellularLocation>
    <text evidence="1">The tmRNA-SmpB complex associates with stalled 70S ribosomes.</text>
</comment>
<comment type="similarity">
    <text evidence="1">Belongs to the SmpB family.</text>
</comment>
<protein>
    <recommendedName>
        <fullName evidence="1">SsrA-binding protein</fullName>
    </recommendedName>
    <alternativeName>
        <fullName evidence="1">Small protein B</fullName>
    </alternativeName>
</protein>
<sequence length="149" mass="17493">MEVIAENRKARFEYFILEEFEAGMVLLSSEVKSLRERKVNISDAYVTEKNGEIWLHNMHIAEYKAANKKKHKPKRERKLLLHKKEINKLISQIKTAGVTIVPLSIYFNDKGLVKTRIAIVKGKKLYDKRATIKQREWNRAKSRLSKNNL</sequence>
<keyword id="KW-0963">Cytoplasm</keyword>
<keyword id="KW-1185">Reference proteome</keyword>
<keyword id="KW-0694">RNA-binding</keyword>
<proteinExistence type="inferred from homology"/>
<name>SSRP_WOLTR</name>
<gene>
    <name evidence="1" type="primary">smpB</name>
    <name type="ordered locus">Wbm0080</name>
</gene>
<reference key="1">
    <citation type="journal article" date="2005" name="PLoS Biol.">
        <title>The Wolbachia genome of Brugia malayi: endosymbiont evolution within a human pathogenic nematode.</title>
        <authorList>
            <person name="Foster J."/>
            <person name="Ganatra M."/>
            <person name="Kamal I."/>
            <person name="Ware J."/>
            <person name="Makarova K."/>
            <person name="Ivanova N."/>
            <person name="Bhattacharyya A."/>
            <person name="Kapatral V."/>
            <person name="Kumar S."/>
            <person name="Posfai J."/>
            <person name="Vincze T."/>
            <person name="Ingram J."/>
            <person name="Moran L."/>
            <person name="Lapidus A."/>
            <person name="Omelchenko M."/>
            <person name="Kyrpides N."/>
            <person name="Ghedin E."/>
            <person name="Wang S."/>
            <person name="Goltsman E."/>
            <person name="Joukov V."/>
            <person name="Ostrovskaya O."/>
            <person name="Tsukerman K."/>
            <person name="Mazur M."/>
            <person name="Comb D."/>
            <person name="Koonin E."/>
            <person name="Slatko B."/>
        </authorList>
    </citation>
    <scope>NUCLEOTIDE SEQUENCE [LARGE SCALE GENOMIC DNA]</scope>
    <source>
        <strain>TRS</strain>
    </source>
</reference>
<dbReference type="EMBL" id="AE017321">
    <property type="protein sequence ID" value="AAW70672.1"/>
    <property type="molecule type" value="Genomic_DNA"/>
</dbReference>
<dbReference type="RefSeq" id="WP_011256282.1">
    <property type="nucleotide sequence ID" value="NC_006833.1"/>
</dbReference>
<dbReference type="SMR" id="Q5GTK2"/>
<dbReference type="STRING" id="292805.Wbm0080"/>
<dbReference type="KEGG" id="wbm:Wbm0080"/>
<dbReference type="eggNOG" id="COG0691">
    <property type="taxonomic scope" value="Bacteria"/>
</dbReference>
<dbReference type="HOGENOM" id="CLU_108953_0_1_5"/>
<dbReference type="Proteomes" id="UP000000534">
    <property type="component" value="Chromosome"/>
</dbReference>
<dbReference type="GO" id="GO:0005829">
    <property type="term" value="C:cytosol"/>
    <property type="evidence" value="ECO:0007669"/>
    <property type="project" value="TreeGrafter"/>
</dbReference>
<dbReference type="GO" id="GO:0003723">
    <property type="term" value="F:RNA binding"/>
    <property type="evidence" value="ECO:0007669"/>
    <property type="project" value="UniProtKB-UniRule"/>
</dbReference>
<dbReference type="GO" id="GO:0070929">
    <property type="term" value="P:trans-translation"/>
    <property type="evidence" value="ECO:0007669"/>
    <property type="project" value="UniProtKB-UniRule"/>
</dbReference>
<dbReference type="CDD" id="cd09294">
    <property type="entry name" value="SmpB"/>
    <property type="match status" value="1"/>
</dbReference>
<dbReference type="Gene3D" id="2.40.280.10">
    <property type="match status" value="1"/>
</dbReference>
<dbReference type="HAMAP" id="MF_00023">
    <property type="entry name" value="SmpB"/>
    <property type="match status" value="1"/>
</dbReference>
<dbReference type="InterPro" id="IPR023620">
    <property type="entry name" value="SmpB"/>
</dbReference>
<dbReference type="InterPro" id="IPR000037">
    <property type="entry name" value="SsrA-bd_prot"/>
</dbReference>
<dbReference type="NCBIfam" id="NF003843">
    <property type="entry name" value="PRK05422.1"/>
    <property type="match status" value="1"/>
</dbReference>
<dbReference type="NCBIfam" id="TIGR00086">
    <property type="entry name" value="smpB"/>
    <property type="match status" value="1"/>
</dbReference>
<dbReference type="PANTHER" id="PTHR30308:SF2">
    <property type="entry name" value="SSRA-BINDING PROTEIN"/>
    <property type="match status" value="1"/>
</dbReference>
<dbReference type="PANTHER" id="PTHR30308">
    <property type="entry name" value="TMRNA-BINDING COMPONENT OF TRANS-TRANSLATION TAGGING COMPLEX"/>
    <property type="match status" value="1"/>
</dbReference>
<dbReference type="Pfam" id="PF01668">
    <property type="entry name" value="SmpB"/>
    <property type="match status" value="1"/>
</dbReference>
<dbReference type="SUPFAM" id="SSF74982">
    <property type="entry name" value="Small protein B (SmpB)"/>
    <property type="match status" value="1"/>
</dbReference>
<accession>Q5GTK2</accession>